<keyword id="KW-0210">Decarboxylase</keyword>
<keyword id="KW-0456">Lyase</keyword>
<keyword id="KW-0663">Pyridoxal phosphate</keyword>
<keyword id="KW-1185">Reference proteome</keyword>
<feature type="chain" id="PRO_0000147024" description="Probable L-tyrosine/L-aspartate decarboxylase">
    <location>
        <begin position="1"/>
        <end position="372"/>
    </location>
</feature>
<feature type="modified residue" description="N6-(pyridoxal phosphate)lysine" evidence="1">
    <location>
        <position position="215"/>
    </location>
</feature>
<organism>
    <name type="scientific">Methanopyrus kandleri (strain AV19 / DSM 6324 / JCM 9639 / NBRC 100938)</name>
    <dbReference type="NCBI Taxonomy" id="190192"/>
    <lineage>
        <taxon>Archaea</taxon>
        <taxon>Methanobacteriati</taxon>
        <taxon>Methanobacteriota</taxon>
        <taxon>Methanomada group</taxon>
        <taxon>Methanopyri</taxon>
        <taxon>Methanopyrales</taxon>
        <taxon>Methanopyraceae</taxon>
        <taxon>Methanopyrus</taxon>
    </lineage>
</organism>
<accession>Q8TV92</accession>
<gene>
    <name evidence="1" type="primary">mfnA</name>
    <name type="ordered locus">MK1500</name>
</gene>
<sequence length="372" mass="40407">MILQRDSDYSDGTVLGSMCTEPHPVAAEAFVAGLHVNLGDPYLFPNAYRAERECIGWLAETLLDHPAPEEAEGSIVSGGTEANILAAYAAREVTGGREIIVPATRHFSFEKAARMLRMKLVEAPLRSDYTVDVDAVQDLISRDTALIVGIVGTTETGSVDDIEALSDVAEDHGVPLHVDAAFGGFTAPFLREEYPLPRFGFDLEAVVSVTVDPHKMGLVPPPAGGIVFRDDEFPKAIEVYAPYLSGGGASQYTITGTRPGAPVLALYANILELGEEGYRRIAFRCYEETLKVAEKARELGLELAVDPPHLNLVNIRLPDRGTAERLLRESEREGWKISVSTKPLGVRIVMMPHLDAETVSRFLELVARVLGG</sequence>
<evidence type="ECO:0000255" key="1">
    <source>
        <dbReference type="HAMAP-Rule" id="MF_01610"/>
    </source>
</evidence>
<proteinExistence type="inferred from homology"/>
<name>MFNA_METKA</name>
<dbReference type="EC" id="4.1.1.11" evidence="1"/>
<dbReference type="EC" id="4.1.1.25" evidence="1"/>
<dbReference type="EMBL" id="AE009439">
    <property type="protein sequence ID" value="AAM02713.1"/>
    <property type="molecule type" value="Genomic_DNA"/>
</dbReference>
<dbReference type="RefSeq" id="WP_011019868.1">
    <property type="nucleotide sequence ID" value="NC_003551.1"/>
</dbReference>
<dbReference type="SMR" id="Q8TV92"/>
<dbReference type="FunCoup" id="Q8TV92">
    <property type="interactions" value="162"/>
</dbReference>
<dbReference type="STRING" id="190192.MK1500"/>
<dbReference type="PaxDb" id="190192-MK1500"/>
<dbReference type="EnsemblBacteria" id="AAM02713">
    <property type="protein sequence ID" value="AAM02713"/>
    <property type="gene ID" value="MK1500"/>
</dbReference>
<dbReference type="GeneID" id="1478095"/>
<dbReference type="KEGG" id="mka:MK1500"/>
<dbReference type="PATRIC" id="fig|190192.8.peg.1658"/>
<dbReference type="HOGENOM" id="CLU_028929_2_1_2"/>
<dbReference type="InParanoid" id="Q8TV92"/>
<dbReference type="OrthoDB" id="56891at2157"/>
<dbReference type="UniPathway" id="UPA00080"/>
<dbReference type="UniPathway" id="UPA00241"/>
<dbReference type="Proteomes" id="UP000001826">
    <property type="component" value="Chromosome"/>
</dbReference>
<dbReference type="GO" id="GO:0004068">
    <property type="term" value="F:aspartate 1-decarboxylase activity"/>
    <property type="evidence" value="ECO:0007669"/>
    <property type="project" value="UniProtKB-UniRule"/>
</dbReference>
<dbReference type="GO" id="GO:0030170">
    <property type="term" value="F:pyridoxal phosphate binding"/>
    <property type="evidence" value="ECO:0007669"/>
    <property type="project" value="UniProtKB-UniRule"/>
</dbReference>
<dbReference type="GO" id="GO:0004837">
    <property type="term" value="F:tyrosine decarboxylase activity"/>
    <property type="evidence" value="ECO:0007669"/>
    <property type="project" value="UniProtKB-UniRule"/>
</dbReference>
<dbReference type="GO" id="GO:0019752">
    <property type="term" value="P:carboxylic acid metabolic process"/>
    <property type="evidence" value="ECO:0007669"/>
    <property type="project" value="InterPro"/>
</dbReference>
<dbReference type="GO" id="GO:0015937">
    <property type="term" value="P:coenzyme A biosynthetic process"/>
    <property type="evidence" value="ECO:0007669"/>
    <property type="project" value="UniProtKB-UniRule"/>
</dbReference>
<dbReference type="GO" id="GO:2001120">
    <property type="term" value="P:methanofuran biosynthetic process"/>
    <property type="evidence" value="ECO:0007669"/>
    <property type="project" value="UniProtKB-UniRule"/>
</dbReference>
<dbReference type="Gene3D" id="3.90.1150.10">
    <property type="entry name" value="Aspartate Aminotransferase, domain 1"/>
    <property type="match status" value="1"/>
</dbReference>
<dbReference type="Gene3D" id="3.40.640.10">
    <property type="entry name" value="Type I PLP-dependent aspartate aminotransferase-like (Major domain)"/>
    <property type="match status" value="1"/>
</dbReference>
<dbReference type="HAMAP" id="MF_01610">
    <property type="entry name" value="MfnA_decarbox"/>
    <property type="match status" value="1"/>
</dbReference>
<dbReference type="InterPro" id="IPR050477">
    <property type="entry name" value="GrpII_AminoAcid_Decarb"/>
</dbReference>
<dbReference type="InterPro" id="IPR020931">
    <property type="entry name" value="MfnA"/>
</dbReference>
<dbReference type="InterPro" id="IPR002129">
    <property type="entry name" value="PyrdxlP-dep_de-COase"/>
</dbReference>
<dbReference type="InterPro" id="IPR015424">
    <property type="entry name" value="PyrdxlP-dep_Trfase"/>
</dbReference>
<dbReference type="InterPro" id="IPR015421">
    <property type="entry name" value="PyrdxlP-dep_Trfase_major"/>
</dbReference>
<dbReference type="InterPro" id="IPR015422">
    <property type="entry name" value="PyrdxlP-dep_Trfase_small"/>
</dbReference>
<dbReference type="NCBIfam" id="TIGR03812">
    <property type="entry name" value="tyr_de_CO2_Arch"/>
    <property type="match status" value="1"/>
</dbReference>
<dbReference type="PANTHER" id="PTHR42735">
    <property type="match status" value="1"/>
</dbReference>
<dbReference type="PANTHER" id="PTHR42735:SF6">
    <property type="entry name" value="SPHINGOSINE-1-PHOSPHATE LYASE 1"/>
    <property type="match status" value="1"/>
</dbReference>
<dbReference type="Pfam" id="PF00282">
    <property type="entry name" value="Pyridoxal_deC"/>
    <property type="match status" value="1"/>
</dbReference>
<dbReference type="SUPFAM" id="SSF53383">
    <property type="entry name" value="PLP-dependent transferases"/>
    <property type="match status" value="1"/>
</dbReference>
<reference key="1">
    <citation type="journal article" date="2002" name="Proc. Natl. Acad. Sci. U.S.A.">
        <title>The complete genome of hyperthermophile Methanopyrus kandleri AV19 and monophyly of archaeal methanogens.</title>
        <authorList>
            <person name="Slesarev A.I."/>
            <person name="Mezhevaya K.V."/>
            <person name="Makarova K.S."/>
            <person name="Polushin N.N."/>
            <person name="Shcherbinina O.V."/>
            <person name="Shakhova V.V."/>
            <person name="Belova G.I."/>
            <person name="Aravind L."/>
            <person name="Natale D.A."/>
            <person name="Rogozin I.B."/>
            <person name="Tatusov R.L."/>
            <person name="Wolf Y.I."/>
            <person name="Stetter K.O."/>
            <person name="Malykh A.G."/>
            <person name="Koonin E.V."/>
            <person name="Kozyavkin S.A."/>
        </authorList>
    </citation>
    <scope>NUCLEOTIDE SEQUENCE [LARGE SCALE GENOMIC DNA]</scope>
    <source>
        <strain>AV19 / DSM 6324 / JCM 9639 / NBRC 100938</strain>
    </source>
</reference>
<comment type="function">
    <text evidence="1">Catalyzes the decarboxylation of L-tyrosine to produce tyramine for methanofuran biosynthesis. Can also catalyze the decarboxylation of L-aspartate to produce beta-alanine for coenzyme A (CoA) biosynthesis.</text>
</comment>
<comment type="catalytic activity">
    <reaction evidence="1">
        <text>L-tyrosine + H(+) = tyramine + CO2</text>
        <dbReference type="Rhea" id="RHEA:14345"/>
        <dbReference type="ChEBI" id="CHEBI:15378"/>
        <dbReference type="ChEBI" id="CHEBI:16526"/>
        <dbReference type="ChEBI" id="CHEBI:58315"/>
        <dbReference type="ChEBI" id="CHEBI:327995"/>
        <dbReference type="EC" id="4.1.1.25"/>
    </reaction>
</comment>
<comment type="catalytic activity">
    <reaction evidence="1">
        <text>L-aspartate + H(+) = beta-alanine + CO2</text>
        <dbReference type="Rhea" id="RHEA:19497"/>
        <dbReference type="ChEBI" id="CHEBI:15378"/>
        <dbReference type="ChEBI" id="CHEBI:16526"/>
        <dbReference type="ChEBI" id="CHEBI:29991"/>
        <dbReference type="ChEBI" id="CHEBI:57966"/>
        <dbReference type="EC" id="4.1.1.11"/>
    </reaction>
</comment>
<comment type="cofactor">
    <cofactor evidence="1">
        <name>pyridoxal 5'-phosphate</name>
        <dbReference type="ChEBI" id="CHEBI:597326"/>
    </cofactor>
</comment>
<comment type="pathway">
    <text evidence="1">Cofactor biosynthesis; methanofuran biosynthesis.</text>
</comment>
<comment type="pathway">
    <text evidence="1">Cofactor biosynthesis; coenzyme A biosynthesis.</text>
</comment>
<comment type="similarity">
    <text evidence="1">Belongs to the group II decarboxylase family. MfnA subfamily.</text>
</comment>
<protein>
    <recommendedName>
        <fullName evidence="1">Probable L-tyrosine/L-aspartate decarboxylase</fullName>
        <shortName evidence="1">TDC/ADC</shortName>
        <ecNumber evidence="1">4.1.1.11</ecNumber>
        <ecNumber evidence="1">4.1.1.25</ecNumber>
    </recommendedName>
</protein>